<reference key="1">
    <citation type="journal article" date="1993" name="J. Biol. Chem.">
        <title>Alternative extracellular and cytoplasmic domains of the integrin alpha 7 subunit are differentially expressed during development.</title>
        <authorList>
            <person name="Ziober B.L."/>
            <person name="Vu M.P."/>
            <person name="Waleh N."/>
            <person name="Crawford J."/>
            <person name="Lin C.-S."/>
            <person name="Kramer R.H."/>
        </authorList>
    </citation>
    <scope>NUCLEOTIDE SEQUENCE [MRNA] (ISOFORM ALPHA-7X2B)</scope>
    <scope>NUCLEOTIDE SEQUENCE [GENOMIC DNA] OF 1-70 (ISOFORM ALPHA-7X1X2B)</scope>
    <scope>NUCLEOTIDE SEQUENCE [MRNA] OF 1031-1179 (ISOFORMS ALPHA-7X1A/ALPHA-7X2A/ALPHA-7X1X2A)</scope>
    <scope>ALTERNATIVE SPLICING</scope>
    <source>
        <strain>BALB/cJ</strain>
        <tissue>Heart</tissue>
    </source>
</reference>
<reference key="2">
    <citation type="submission" date="1997-04" db="EMBL/GenBank/DDBJ databases">
        <title>Genomic organization and chromosomal localization of the mouse integrin alpha7 gene.</title>
        <authorList>
            <person name="Saher G."/>
            <person name="Echtermeyer F."/>
            <person name="Beier D.R."/>
            <person name="Poeschl E."/>
            <person name="Mayer U."/>
        </authorList>
    </citation>
    <scope>NUCLEOTIDE SEQUENCE [GENOMIC DNA] (ISOFORMS ALPHA-7X1X2A AND ALPHA-7X1X2B)</scope>
    <source>
        <strain>129/Sv</strain>
    </source>
</reference>
<reference key="3">
    <citation type="journal article" date="1996" name="J. Biol. Chem.">
        <title>Identification and characterization of the cell type-specific and developmentally regulated alpha7 integrin gene promoter.</title>
        <authorList>
            <person name="Ziober B.L."/>
            <person name="Kramer R.H."/>
        </authorList>
    </citation>
    <scope>NUCLEOTIDE SEQUENCE [GENOMIC DNA] OF 1-70</scope>
    <source>
        <strain>C57BL/6 X CBA</strain>
    </source>
</reference>
<reference key="4">
    <citation type="journal article" date="1991" name="Cell Regul.">
        <title>Laminin-binding integrin alpha 7 beta 1: functional characterization and expression in normal and malignant melanocytes.</title>
        <authorList>
            <person name="Kramer R.H."/>
            <person name="Vu M.P."/>
            <person name="Cheng Y.F."/>
            <person name="Ramos D.M."/>
            <person name="Timpl R."/>
            <person name="Waleh N."/>
        </authorList>
    </citation>
    <scope>PROTEIN SEQUENCE OF 34-58</scope>
    <source>
        <tissue>Melanoma</tissue>
    </source>
</reference>
<reference key="5">
    <citation type="journal article" date="1993" name="J. Biol. Chem.">
        <title>A new isoform of the laminin receptor integrin alpha 7 beta 1 is developmentally regulated in skeletal muscle.</title>
        <authorList>
            <person name="Collo G."/>
            <person name="Starr L."/>
            <person name="Quaranta V."/>
        </authorList>
    </citation>
    <scope>NUCLEOTIDE SEQUENCE [MRNA] OF 1013-1179 (ISOFORMS ALPHA-7X1A/ALPHA-7X2A/ALPHA-7X1X2A)</scope>
    <source>
        <strain>C57BL/6 X BALB/c</strain>
    </source>
</reference>
<reference key="6">
    <citation type="journal article" date="1996" name="Dev. Biol.">
        <title>Synaptic integrins in developing, adult, and mutant muscle: selective association of alpha1, alpha7A, and alpha7B integrins with the neuromuscular junction.</title>
        <authorList>
            <person name="Martin P.T."/>
            <person name="Kaufman S.J."/>
            <person name="Kramer R.H."/>
            <person name="Sanes J.R."/>
        </authorList>
    </citation>
    <scope>TISSUE SPECIFICITY</scope>
</reference>
<reference key="7">
    <citation type="journal article" date="1997" name="Nat. Genet.">
        <title>Absence of integrin alpha 7 causes a novel form of muscular dystrophy.</title>
        <authorList>
            <person name="Mayer U."/>
            <person name="Saher G."/>
            <person name="Fassler R."/>
            <person name="Bornemann A."/>
            <person name="Echtermeyer F."/>
            <person name="von der Mark H."/>
            <person name="Miosge N."/>
            <person name="Poeschl E."/>
            <person name="von der Mark K."/>
        </authorList>
    </citation>
    <scope>FUNCTION</scope>
</reference>
<reference key="8">
    <citation type="journal article" date="1995" name="J. Biol. Chem.">
        <title>Processing of ADP-ribosylated integrin alpha 7 in skeletal muscle myotubes.</title>
        <authorList>
            <person name="Zolkiewska A."/>
            <person name="Moss J."/>
        </authorList>
    </citation>
    <scope>ADP-RIBOSYLATION</scope>
</reference>
<reference key="9">
    <citation type="journal article" date="2008" name="J. Biol. Chem.">
        <title>Genetically determined proteolytic cleavage modulates alpha7beta1 integrin function.</title>
        <authorList>
            <person name="Liu J."/>
            <person name="Gurpur P.B."/>
            <person name="Kaufman S.J."/>
        </authorList>
    </citation>
    <scope>ABSENCE OF CLEAVAGE BY UROKINASE</scope>
</reference>
<reference key="10">
    <citation type="journal article" date="2009" name="Mol. Cell. Proteomics">
        <title>The mouse C2C12 myoblast cell surface N-linked glycoproteome: identification, glycosite occupancy, and membrane orientation.</title>
        <authorList>
            <person name="Gundry R.L."/>
            <person name="Raginski K."/>
            <person name="Tarasova Y."/>
            <person name="Tchernyshyov I."/>
            <person name="Bausch-Fluck D."/>
            <person name="Elliott S.T."/>
            <person name="Boheler K.R."/>
            <person name="Van Eyk J.E."/>
            <person name="Wollscheid B."/>
        </authorList>
    </citation>
    <scope>GLYCOSYLATION [LARGE SCALE ANALYSIS] AT ASN-1023</scope>
    <source>
        <tissue>Myoblast</tissue>
    </source>
</reference>
<reference key="11">
    <citation type="journal article" date="2010" name="Cell">
        <title>A tissue-specific atlas of mouse protein phosphorylation and expression.</title>
        <authorList>
            <person name="Huttlin E.L."/>
            <person name="Jedrychowski M.P."/>
            <person name="Elias J.E."/>
            <person name="Goswami T."/>
            <person name="Rad R."/>
            <person name="Beausoleil S.A."/>
            <person name="Villen J."/>
            <person name="Haas W."/>
            <person name="Sowa M.E."/>
            <person name="Gygi S.P."/>
        </authorList>
    </citation>
    <scope>IDENTIFICATION BY MASS SPECTROMETRY [LARGE SCALE ANALYSIS]</scope>
    <source>
        <tissue>Brown adipose tissue</tissue>
        <tissue>Heart</tissue>
        <tissue>Lung</tissue>
    </source>
</reference>
<sequence length="1179" mass="129329">MARIPRCDFLRPPGIYYLITSLLAGLFLPPAIAFNLDVMGAIRKEGEPGSLFGFSVALHRQLQPRPQSWLLVGAPQALALPGQQANRTGGLFACPLSLEETDCYRVDIDRGANVQKESKENQWLGVSVRSQGAGGKIVTCAHRYESRQRVDQALETRDVIGRCFVLSQDLAIRDELDGGEWKFCEGRPQGHEQFGFCQQGTAATFSPDSHYLVFGAPGTYNWKGTARVELCAQGSPDLAHLDDGPYEAGGEKEQDPRLIPVPANSYLGLLFVTNIDSSDPDQLVYKTLDPADRLTGPAGDLTLNSYLGFSIDSGKGLMRSEELSFVAGAPRANHKGAVVILRKDSATRLIPEVVLSGERLTSGFGYSLAVTDLNNDGWADLIVGAPYFFERQEELGGAVYVYMNQGGHWADISPLRICGSPDSMFGISLAVLGDLNQDGFPDIAVGAPFDGDGKVFIYHGSSLGVVVKPSQVLEGEAVGIKSFGYSLSGGLDVDGNHYPDLLVGSLADTAALFRARPVLHVSQEIFIDPRAIDLEQPNCADGRLVCVDIKICFSYVAVPSSYSPSVALDYMLDGDTDRRLRGQVPRVTFLSRGLDDLRHQSSGTVWLKHQHDRVCGDTVFQLQENVKDKLRAIVVTLSYGLRTPPLGRQAPGQELPTVAPILNAHQPSTQRTEIHFLKQGCGQDKICQSNLQLERYQFCSRISDTEFQALPMDLDGRTALFALSGQPFIGLELTVTNLPSDPSRPQADGDDAHEAQLLVTLPASLRYSGVRALDSVEKPLCLSNDSASHVECELGNPMKRGAQVTFYLILSTSGITIETTELEVKLLLATISEQELDPVSVRAHVFIELPLSISGVATPQQLFFSGEVKGESAMRSERELGRKVKYEVTVSNQGQSLNTLGSANLNIMWPHEIANGKWLLYPMRVELEGGQGPGKRGICSPRPNILQLDVDSRDRRRRELGQPEPQEPPEKVEPSTSWWPVSSAEKRNMTLDCPRTAKCVVFSCPLYSFDRAAVLHVWGRLWNSTFLEEYMAVKSLEVIVRANITVKSSIKNLLLRDASTVIPVMVYLDPMAVVVEGVPWWVILLGVLAGLLVLALLVLLLWKLGFFKRAKHPEATVPQYHAVKIPREDRQQFKEEKTGTIQRSNWGNSQWEGSDAHPILAADWHPELGPDGHPVPATA</sequence>
<dbReference type="EMBL" id="L23423">
    <property type="protein sequence ID" value="AAA16600.1"/>
    <property type="molecule type" value="mRNA"/>
</dbReference>
<dbReference type="EMBL" id="Y12380">
    <property type="protein sequence ID" value="CAA73023.1"/>
    <property type="molecule type" value="Genomic_DNA"/>
</dbReference>
<dbReference type="EMBL" id="Y12383">
    <property type="protein sequence ID" value="CAA73023.1"/>
    <property type="status" value="JOINED"/>
    <property type="molecule type" value="Genomic_DNA"/>
</dbReference>
<dbReference type="EMBL" id="Y12384">
    <property type="protein sequence ID" value="CAA73023.1"/>
    <property type="status" value="JOINED"/>
    <property type="molecule type" value="Genomic_DNA"/>
</dbReference>
<dbReference type="EMBL" id="Y12385">
    <property type="protein sequence ID" value="CAA73023.1"/>
    <property type="status" value="JOINED"/>
    <property type="molecule type" value="Genomic_DNA"/>
</dbReference>
<dbReference type="EMBL" id="Y12386">
    <property type="protein sequence ID" value="CAA73023.1"/>
    <property type="status" value="JOINED"/>
    <property type="molecule type" value="Genomic_DNA"/>
</dbReference>
<dbReference type="EMBL" id="Y12387">
    <property type="protein sequence ID" value="CAA73023.1"/>
    <property type="status" value="JOINED"/>
    <property type="molecule type" value="Genomic_DNA"/>
</dbReference>
<dbReference type="EMBL" id="Y12388">
    <property type="protein sequence ID" value="CAA73023.1"/>
    <property type="status" value="JOINED"/>
    <property type="molecule type" value="Genomic_DNA"/>
</dbReference>
<dbReference type="EMBL" id="Y12389">
    <property type="protein sequence ID" value="CAA73023.1"/>
    <property type="status" value="JOINED"/>
    <property type="molecule type" value="Genomic_DNA"/>
</dbReference>
<dbReference type="EMBL" id="Y12390">
    <property type="protein sequence ID" value="CAA73023.1"/>
    <property type="status" value="JOINED"/>
    <property type="molecule type" value="Genomic_DNA"/>
</dbReference>
<dbReference type="EMBL" id="Y12382">
    <property type="protein sequence ID" value="CAA73023.1"/>
    <property type="status" value="JOINED"/>
    <property type="molecule type" value="Genomic_DNA"/>
</dbReference>
<dbReference type="EMBL" id="L23422">
    <property type="protein sequence ID" value="AAA16599.1"/>
    <property type="molecule type" value="Genomic_DNA"/>
</dbReference>
<dbReference type="EMBL" id="Y12380">
    <property type="protein sequence ID" value="CAA73024.1"/>
    <property type="molecule type" value="Genomic_DNA"/>
</dbReference>
<dbReference type="EMBL" id="Y12383">
    <property type="protein sequence ID" value="CAA73024.1"/>
    <property type="status" value="JOINED"/>
    <property type="molecule type" value="Genomic_DNA"/>
</dbReference>
<dbReference type="EMBL" id="Y12384">
    <property type="protein sequence ID" value="CAA73024.1"/>
    <property type="status" value="JOINED"/>
    <property type="molecule type" value="Genomic_DNA"/>
</dbReference>
<dbReference type="EMBL" id="Y12385">
    <property type="protein sequence ID" value="CAA73024.1"/>
    <property type="status" value="JOINED"/>
    <property type="molecule type" value="Genomic_DNA"/>
</dbReference>
<dbReference type="EMBL" id="Y12386">
    <property type="protein sequence ID" value="CAA73024.1"/>
    <property type="status" value="JOINED"/>
    <property type="molecule type" value="Genomic_DNA"/>
</dbReference>
<dbReference type="EMBL" id="Y12387">
    <property type="protein sequence ID" value="CAA73024.1"/>
    <property type="status" value="JOINED"/>
    <property type="molecule type" value="Genomic_DNA"/>
</dbReference>
<dbReference type="EMBL" id="Y12388">
    <property type="protein sequence ID" value="CAA73024.1"/>
    <property type="status" value="JOINED"/>
    <property type="molecule type" value="Genomic_DNA"/>
</dbReference>
<dbReference type="EMBL" id="Y12389">
    <property type="protein sequence ID" value="CAA73024.1"/>
    <property type="status" value="JOINED"/>
    <property type="molecule type" value="Genomic_DNA"/>
</dbReference>
<dbReference type="EMBL" id="Y12390">
    <property type="protein sequence ID" value="CAA73024.1"/>
    <property type="status" value="JOINED"/>
    <property type="molecule type" value="Genomic_DNA"/>
</dbReference>
<dbReference type="EMBL" id="Y12381">
    <property type="protein sequence ID" value="CAA73024.1"/>
    <property type="status" value="JOINED"/>
    <property type="molecule type" value="Genomic_DNA"/>
</dbReference>
<dbReference type="EMBL" id="Y12382">
    <property type="protein sequence ID" value="CAA73024.1"/>
    <property type="status" value="JOINED"/>
    <property type="molecule type" value="Genomic_DNA"/>
</dbReference>
<dbReference type="EMBL" id="U60419">
    <property type="protein sequence ID" value="AAC52772.1"/>
    <property type="molecule type" value="Genomic_DNA"/>
</dbReference>
<dbReference type="EMBL" id="L23421">
    <property type="protein sequence ID" value="AAA16598.1"/>
    <property type="molecule type" value="mRNA"/>
</dbReference>
<dbReference type="EMBL" id="L16544">
    <property type="status" value="NOT_ANNOTATED_CDS"/>
    <property type="molecule type" value="mRNA"/>
</dbReference>
<dbReference type="PIR" id="I61186">
    <property type="entry name" value="I61186"/>
</dbReference>
<dbReference type="PIR" id="I61187">
    <property type="entry name" value="I61187"/>
</dbReference>
<dbReference type="SMR" id="Q61738"/>
<dbReference type="ComplexPortal" id="CPX-3121">
    <property type="entry name" value="Integrin alpha7-beta1 complex"/>
</dbReference>
<dbReference type="CORUM" id="Q61738"/>
<dbReference type="FunCoup" id="Q61738">
    <property type="interactions" value="105"/>
</dbReference>
<dbReference type="IntAct" id="Q61738">
    <property type="interactions" value="4"/>
</dbReference>
<dbReference type="STRING" id="10090.ENSMUSP00000096712"/>
<dbReference type="GlyConnect" id="2400">
    <property type="glycosylation" value="4 N-Linked glycans (2 sites)"/>
</dbReference>
<dbReference type="GlyCosmos" id="Q61738">
    <property type="glycosylation" value="6 sites, 4 glycans"/>
</dbReference>
<dbReference type="GlyGen" id="Q61738">
    <property type="glycosylation" value="7 sites, 11 N-linked glycans (6 sites), 1 O-linked glycan (1 site)"/>
</dbReference>
<dbReference type="iPTMnet" id="Q61738"/>
<dbReference type="PhosphoSitePlus" id="Q61738"/>
<dbReference type="PaxDb" id="10090-ENSMUSP00000096712"/>
<dbReference type="PeptideAtlas" id="Q61738"/>
<dbReference type="ProteomicsDB" id="268884">
    <molecule id="Q61738-1"/>
</dbReference>
<dbReference type="ProteomicsDB" id="268885">
    <molecule id="Q61738-2"/>
</dbReference>
<dbReference type="ProteomicsDB" id="268886">
    <molecule id="Q61738-3"/>
</dbReference>
<dbReference type="ProteomicsDB" id="268887">
    <molecule id="Q61738-4"/>
</dbReference>
<dbReference type="ProteomicsDB" id="268888">
    <molecule id="Q61738-5"/>
</dbReference>
<dbReference type="ProteomicsDB" id="268889">
    <molecule id="Q61738-6"/>
</dbReference>
<dbReference type="ABCD" id="Q61738">
    <property type="antibodies" value="49 sequenced antibodies"/>
</dbReference>
<dbReference type="AGR" id="MGI:102700"/>
<dbReference type="MGI" id="MGI:102700">
    <property type="gene designation" value="Itga7"/>
</dbReference>
<dbReference type="eggNOG" id="KOG3637">
    <property type="taxonomic scope" value="Eukaryota"/>
</dbReference>
<dbReference type="InParanoid" id="Q61738"/>
<dbReference type="PhylomeDB" id="Q61738"/>
<dbReference type="Reactome" id="R-MMU-3000157">
    <property type="pathway name" value="Laminin interactions"/>
</dbReference>
<dbReference type="Reactome" id="R-MMU-3000178">
    <property type="pathway name" value="ECM proteoglycans"/>
</dbReference>
<dbReference type="PRO" id="PR:Q61738"/>
<dbReference type="Proteomes" id="UP000000589">
    <property type="component" value="Unplaced"/>
</dbReference>
<dbReference type="RNAct" id="Q61738">
    <property type="molecule type" value="protein"/>
</dbReference>
<dbReference type="GO" id="GO:0005737">
    <property type="term" value="C:cytoplasm"/>
    <property type="evidence" value="ECO:0000314"/>
    <property type="project" value="MGI"/>
</dbReference>
<dbReference type="GO" id="GO:0034677">
    <property type="term" value="C:integrin alpha7-beta1 complex"/>
    <property type="evidence" value="ECO:0000314"/>
    <property type="project" value="MGI"/>
</dbReference>
<dbReference type="GO" id="GO:0005927">
    <property type="term" value="C:muscle tendon junction"/>
    <property type="evidence" value="ECO:0000314"/>
    <property type="project" value="MGI"/>
</dbReference>
<dbReference type="GO" id="GO:0031594">
    <property type="term" value="C:neuromuscular junction"/>
    <property type="evidence" value="ECO:0000314"/>
    <property type="project" value="MGI"/>
</dbReference>
<dbReference type="GO" id="GO:0042383">
    <property type="term" value="C:sarcolemma"/>
    <property type="evidence" value="ECO:0000314"/>
    <property type="project" value="MGI"/>
</dbReference>
<dbReference type="GO" id="GO:0046872">
    <property type="term" value="F:metal ion binding"/>
    <property type="evidence" value="ECO:0007669"/>
    <property type="project" value="UniProtKB-KW"/>
</dbReference>
<dbReference type="GO" id="GO:0048514">
    <property type="term" value="P:blood vessel morphogenesis"/>
    <property type="evidence" value="ECO:0000315"/>
    <property type="project" value="MGI"/>
</dbReference>
<dbReference type="GO" id="GO:0007155">
    <property type="term" value="P:cell adhesion"/>
    <property type="evidence" value="ECO:0000315"/>
    <property type="project" value="MGI"/>
</dbReference>
<dbReference type="GO" id="GO:0016477">
    <property type="term" value="P:cell migration"/>
    <property type="evidence" value="ECO:0000315"/>
    <property type="project" value="MGI"/>
</dbReference>
<dbReference type="GO" id="GO:0007229">
    <property type="term" value="P:integrin-mediated signaling pathway"/>
    <property type="evidence" value="ECO:0007669"/>
    <property type="project" value="UniProtKB-KW"/>
</dbReference>
<dbReference type="GO" id="GO:0008360">
    <property type="term" value="P:regulation of cell shape"/>
    <property type="evidence" value="ECO:0007669"/>
    <property type="project" value="UniProtKB-KW"/>
</dbReference>
<dbReference type="FunFam" id="2.130.10.130:FF:000002">
    <property type="entry name" value="integrin alpha-6 isoform X2"/>
    <property type="match status" value="2"/>
</dbReference>
<dbReference type="FunFam" id="2.60.40.1510:FF:000002">
    <property type="entry name" value="integrin alpha-6 isoform X2"/>
    <property type="match status" value="1"/>
</dbReference>
<dbReference type="FunFam" id="2.60.40.1530:FF:000001">
    <property type="entry name" value="Integrin subunit alpha 7"/>
    <property type="match status" value="1"/>
</dbReference>
<dbReference type="FunFam" id="1.20.5.930:FF:000001">
    <property type="entry name" value="Integrin subunit alpha V"/>
    <property type="match status" value="1"/>
</dbReference>
<dbReference type="Gene3D" id="1.20.5.930">
    <property type="entry name" value="Bicelle-embedded integrin alpha(iib) transmembrane segment"/>
    <property type="match status" value="1"/>
</dbReference>
<dbReference type="Gene3D" id="2.130.10.130">
    <property type="entry name" value="Integrin alpha, N-terminal"/>
    <property type="match status" value="1"/>
</dbReference>
<dbReference type="Gene3D" id="2.60.40.1460">
    <property type="entry name" value="Integrin domains. Chain A, domain 2"/>
    <property type="match status" value="1"/>
</dbReference>
<dbReference type="Gene3D" id="2.60.40.1510">
    <property type="entry name" value="ntegrin, alpha v. Chain A, domain 3"/>
    <property type="match status" value="1"/>
</dbReference>
<dbReference type="Gene3D" id="2.60.40.1530">
    <property type="entry name" value="ntegrin, alpha v. Chain A, domain 4"/>
    <property type="match status" value="1"/>
</dbReference>
<dbReference type="InterPro" id="IPR013517">
    <property type="entry name" value="FG-GAP"/>
</dbReference>
<dbReference type="InterPro" id="IPR013519">
    <property type="entry name" value="Int_alpha_beta-p"/>
</dbReference>
<dbReference type="InterPro" id="IPR000413">
    <property type="entry name" value="Integrin_alpha"/>
</dbReference>
<dbReference type="InterPro" id="IPR018184">
    <property type="entry name" value="Integrin_alpha_C_CS"/>
</dbReference>
<dbReference type="InterPro" id="IPR013649">
    <property type="entry name" value="Integrin_alpha_Ig-like_1"/>
</dbReference>
<dbReference type="InterPro" id="IPR048285">
    <property type="entry name" value="Integrin_alpha_Ig-like_2"/>
</dbReference>
<dbReference type="InterPro" id="IPR048286">
    <property type="entry name" value="Integrin_alpha_Ig-like_3"/>
</dbReference>
<dbReference type="InterPro" id="IPR028994">
    <property type="entry name" value="Integrin_alpha_N"/>
</dbReference>
<dbReference type="InterPro" id="IPR032695">
    <property type="entry name" value="Integrin_dom_sf"/>
</dbReference>
<dbReference type="PANTHER" id="PTHR23220">
    <property type="entry name" value="INTEGRIN ALPHA"/>
    <property type="match status" value="1"/>
</dbReference>
<dbReference type="PANTHER" id="PTHR23220:SF90">
    <property type="entry name" value="INTEGRIN ALPHA-7"/>
    <property type="match status" value="1"/>
</dbReference>
<dbReference type="Pfam" id="PF01839">
    <property type="entry name" value="FG-GAP"/>
    <property type="match status" value="2"/>
</dbReference>
<dbReference type="Pfam" id="PF08441">
    <property type="entry name" value="Integrin_A_Ig_1"/>
    <property type="match status" value="1"/>
</dbReference>
<dbReference type="Pfam" id="PF20805">
    <property type="entry name" value="Integrin_A_Ig_2"/>
    <property type="match status" value="1"/>
</dbReference>
<dbReference type="Pfam" id="PF20806">
    <property type="entry name" value="Integrin_A_Ig_3"/>
    <property type="match status" value="1"/>
</dbReference>
<dbReference type="PRINTS" id="PR01185">
    <property type="entry name" value="INTEGRINA"/>
</dbReference>
<dbReference type="SMART" id="SM00191">
    <property type="entry name" value="Int_alpha"/>
    <property type="match status" value="5"/>
</dbReference>
<dbReference type="SUPFAM" id="SSF69318">
    <property type="entry name" value="Integrin alpha N-terminal domain"/>
    <property type="match status" value="1"/>
</dbReference>
<dbReference type="SUPFAM" id="SSF69179">
    <property type="entry name" value="Integrin domains"/>
    <property type="match status" value="3"/>
</dbReference>
<dbReference type="PROSITE" id="PS51470">
    <property type="entry name" value="FG_GAP"/>
    <property type="match status" value="7"/>
</dbReference>
<dbReference type="PROSITE" id="PS00242">
    <property type="entry name" value="INTEGRIN_ALPHA"/>
    <property type="match status" value="1"/>
</dbReference>
<proteinExistence type="evidence at protein level"/>
<evidence type="ECO:0000250" key="1"/>
<evidence type="ECO:0000250" key="2">
    <source>
        <dbReference type="UniProtKB" id="P08648"/>
    </source>
</evidence>
<evidence type="ECO:0000255" key="3"/>
<evidence type="ECO:0000255" key="4">
    <source>
        <dbReference type="PROSITE-ProRule" id="PRU00803"/>
    </source>
</evidence>
<evidence type="ECO:0000256" key="5">
    <source>
        <dbReference type="SAM" id="MobiDB-lite"/>
    </source>
</evidence>
<evidence type="ECO:0000269" key="6">
    <source>
    </source>
</evidence>
<evidence type="ECO:0000269" key="7">
    <source>
    </source>
</evidence>
<evidence type="ECO:0000269" key="8">
    <source>
    </source>
</evidence>
<evidence type="ECO:0000269" key="9">
    <source>
    </source>
</evidence>
<evidence type="ECO:0000303" key="10">
    <source>
    </source>
</evidence>
<evidence type="ECO:0000305" key="11"/>
<organism>
    <name type="scientific">Mus musculus</name>
    <name type="common">Mouse</name>
    <dbReference type="NCBI Taxonomy" id="10090"/>
    <lineage>
        <taxon>Eukaryota</taxon>
        <taxon>Metazoa</taxon>
        <taxon>Chordata</taxon>
        <taxon>Craniata</taxon>
        <taxon>Vertebrata</taxon>
        <taxon>Euteleostomi</taxon>
        <taxon>Mammalia</taxon>
        <taxon>Eutheria</taxon>
        <taxon>Euarchontoglires</taxon>
        <taxon>Glires</taxon>
        <taxon>Rodentia</taxon>
        <taxon>Myomorpha</taxon>
        <taxon>Muroidea</taxon>
        <taxon>Muridae</taxon>
        <taxon>Murinae</taxon>
        <taxon>Mus</taxon>
        <taxon>Mus</taxon>
    </lineage>
</organism>
<comment type="function">
    <text evidence="1 9">Integrin alpha-7/beta-1 is the primary laminin receptor on skeletal myoblasts and adult myofibers. During myogenic differentiation, it may induce changes in the shape and mobility of myoblasts, and facilitate their localization at laminin-rich sites of secondary fiber formation. Involved in the maintenance of the myofibers cytoarchitecture as well as for their anchorage, viability and functional integrity. Mice carrying a ITGA7 null allele are viable and fertile, but show progressive muscular dystrophy starting soon after birth, but with a distinct variability in different muscle types. Required to promote contractile phenotype acquisition in differentiated airway smooth muscle (ASM) cells. Acts as a Schwann cell receptor for laminin-2. Acts as a receptor of COMP and mediates its effect on vascular smooth muscle cells (VSMCs) maturation (By similarity).</text>
</comment>
<comment type="subunit">
    <text evidence="1">Heterodimer of an alpha and a beta subunit. The alpha subunit is composed of a heavy and a light chain linked by a disulfide bond. Alpha-7 associates with beta-1. Interacts with COMP. Interacts (via C-terminus intracellular tail region) with CIB1; the interaction is stabilized/increased in a calcium- and magnesium-dependent manner (By similarity).</text>
</comment>
<comment type="interaction">
    <interactant intactId="EBI-1786329">
        <id>Q61738-6</id>
    </interactant>
    <interactant intactId="EBI-2121188">
        <id>Q8C2K1</id>
        <label>Def6</label>
    </interactant>
    <organismsDiffer>false</organismsDiffer>
    <experiments>3</experiments>
</comment>
<comment type="interaction">
    <interactant intactId="EBI-1786329">
        <id>Q61738-6</id>
    </interactant>
    <interactant intactId="EBI-2121215">
        <id>Q6A028</id>
        <label>Swap70</label>
    </interactant>
    <organismsDiffer>false</organismsDiffer>
    <experiments>2</experiments>
</comment>
<comment type="subcellular location">
    <subcellularLocation>
        <location>Membrane</location>
        <topology>Single-pass type I membrane protein</topology>
    </subcellularLocation>
</comment>
<comment type="alternative products">
    <event type="alternative splicing"/>
    <isoform>
        <id>Q61738-1</id>
        <name>Alpha-7X1X2B</name>
        <sequence type="displayed"/>
    </isoform>
    <isoform>
        <id>Q61738-2</id>
        <name>Alpha-7X1A</name>
        <sequence type="described" ref="VSP_002732 VSP_002733"/>
    </isoform>
    <isoform>
        <id>Q61738-3</id>
        <name>Alpha-7X1B</name>
        <sequence type="described" ref="VSP_002732"/>
    </isoform>
    <isoform>
        <id>Q61738-4</id>
        <name>Alpha-7X2A</name>
        <sequence type="described" ref="VSP_002731 VSP_002733"/>
    </isoform>
    <isoform>
        <id>Q61738-5</id>
        <name>Alpha-7X2B</name>
        <sequence type="described" ref="VSP_002731"/>
    </isoform>
    <isoform>
        <id>Q61738-6</id>
        <name>Alpha-7X1X2A</name>
        <sequence type="described" ref="VSP_002733"/>
    </isoform>
    <text>Additional isoforms seem to exist. There is a combination of at least four alternatively spliced domains, two extracellular (X1 and X2) and two cytoplasmic (A and B). A third potential alternatively spliced cytoplasmic domain (C) doesn't appear to be expressed. So far detected are isoform alpha-7X1A, isoform alpha-7X1B and isoform alpha-7X2B. Experimental confirmation may be lacking for some isoforms.</text>
</comment>
<comment type="tissue specificity">
    <text evidence="8">Isoforms containing segment X2 are found in adult heart, lung and skeletal muscle. Isoforms containing segment X1 are expressed in adult heart, lung and in proliferating skeletal myoblasts but not in adult skeletal muscle. Isoforms containing segment a are exclusively found in skeletal muscle. Isoforms containing segment B are widely expressed. In muscle fibers isoforms containing segment A and B are expressed at myotendinous and neuromuscular junctions; isoforms containing segment C are expressed at neuromuscular junctions and at extrasynaptic sites.</text>
</comment>
<comment type="developmental stage">
    <text>Isoforms are developmentally regulated during the formation of skeletal muscle. Undifferentiated (replicating) myoblasts express isoforms containing segment B only, whereas differentiated myoblasts express isoforms containing segments A or B.</text>
</comment>
<comment type="PTM">
    <text>ADP-ribosylated on at least two sites of the extracellular domain in skeletal myotubes (in vitro).</text>
</comment>
<comment type="PTM">
    <text>No proteolytic cleavage to produce the 70 kDa form is seen due to the presence of a Gly instead of an arginine residue at position 647.</text>
</comment>
<comment type="similarity">
    <text evidence="11">Belongs to the integrin alpha chain family.</text>
</comment>
<keyword id="KW-0013">ADP-ribosylation</keyword>
<keyword id="KW-0025">Alternative splicing</keyword>
<keyword id="KW-0106">Calcium</keyword>
<keyword id="KW-0130">Cell adhesion</keyword>
<keyword id="KW-0133">Cell shape</keyword>
<keyword id="KW-0165">Cleavage on pair of basic residues</keyword>
<keyword id="KW-0903">Direct protein sequencing</keyword>
<keyword id="KW-1015">Disulfide bond</keyword>
<keyword id="KW-0325">Glycoprotein</keyword>
<keyword id="KW-0401">Integrin</keyword>
<keyword id="KW-0472">Membrane</keyword>
<keyword id="KW-0479">Metal-binding</keyword>
<keyword id="KW-0675">Receptor</keyword>
<keyword id="KW-1185">Reference proteome</keyword>
<keyword id="KW-0677">Repeat</keyword>
<keyword id="KW-0732">Signal</keyword>
<keyword id="KW-0812">Transmembrane</keyword>
<keyword id="KW-1133">Transmembrane helix</keyword>
<name>ITA7_MOUSE</name>
<feature type="signal peptide" evidence="6">
    <location>
        <begin position="1"/>
        <end position="33"/>
    </location>
</feature>
<feature type="chain" id="PRO_0000016270" description="Integrin alpha-7">
    <location>
        <begin position="34"/>
        <end position="1179"/>
    </location>
</feature>
<feature type="chain" id="PRO_0000016271" description="Integrin alpha-7 heavy chain" evidence="3">
    <location>
        <begin position="34"/>
        <end position="955"/>
    </location>
</feature>
<feature type="chain" id="PRO_0000016272" description="Integrin alpha-7 light chain" evidence="3">
    <location>
        <begin position="959"/>
        <end position="1179"/>
    </location>
</feature>
<feature type="topological domain" description="Extracellular" evidence="3">
    <location>
        <begin position="34"/>
        <end position="1076"/>
    </location>
</feature>
<feature type="transmembrane region" description="Helical" evidence="3">
    <location>
        <begin position="1077"/>
        <end position="1102"/>
    </location>
</feature>
<feature type="topological domain" description="Cytoplasmic" evidence="3">
    <location>
        <begin position="1103"/>
        <end position="1179"/>
    </location>
</feature>
<feature type="repeat" description="FG-GAP 1" evidence="4">
    <location>
        <begin position="38"/>
        <end position="103"/>
    </location>
</feature>
<feature type="repeat" description="FG-GAP 2" evidence="4">
    <location>
        <begin position="110"/>
        <end position="175"/>
    </location>
</feature>
<feature type="repeat" description="FG-GAP 3" evidence="4">
    <location>
        <begin position="185"/>
        <end position="238"/>
    </location>
</feature>
<feature type="repeat" description="FG-GAP 4" evidence="4">
    <location>
        <begin position="292"/>
        <end position="349"/>
    </location>
</feature>
<feature type="repeat" description="FG-GAP 5" evidence="4">
    <location>
        <begin position="350"/>
        <end position="411"/>
    </location>
</feature>
<feature type="repeat" description="FG-GAP 6" evidence="4">
    <location>
        <begin position="412"/>
        <end position="467"/>
    </location>
</feature>
<feature type="repeat" description="FG-GAP 7" evidence="4">
    <location>
        <begin position="471"/>
        <end position="530"/>
    </location>
</feature>
<feature type="repeat" description="1">
    <location>
        <begin position="1155"/>
        <end position="1158"/>
    </location>
</feature>
<feature type="repeat" description="2">
    <location>
        <begin position="1163"/>
        <end position="1166"/>
    </location>
</feature>
<feature type="repeat" description="3">
    <location>
        <begin position="1171"/>
        <end position="1174"/>
    </location>
</feature>
<feature type="region of interest" description="Disordered" evidence="5">
    <location>
        <begin position="952"/>
        <end position="978"/>
    </location>
</feature>
<feature type="region of interest" description="Disordered" evidence="5">
    <location>
        <begin position="1134"/>
        <end position="1153"/>
    </location>
</feature>
<feature type="region of interest" description="3 X 4 AA repeats of D-X-H-P">
    <location>
        <begin position="1155"/>
        <end position="1174"/>
    </location>
</feature>
<feature type="short sequence motif" description="GFFKR motif">
    <location>
        <begin position="1105"/>
        <end position="1109"/>
    </location>
</feature>
<feature type="compositionally biased region" description="Basic and acidic residues" evidence="5">
    <location>
        <begin position="952"/>
        <end position="961"/>
    </location>
</feature>
<feature type="compositionally biased region" description="Polar residues" evidence="5">
    <location>
        <begin position="1139"/>
        <end position="1152"/>
    </location>
</feature>
<feature type="binding site" evidence="2">
    <location>
        <position position="372"/>
    </location>
    <ligand>
        <name>Ca(2+)</name>
        <dbReference type="ChEBI" id="CHEBI:29108"/>
        <label>1</label>
    </ligand>
</feature>
<feature type="binding site" evidence="2">
    <location>
        <position position="374"/>
    </location>
    <ligand>
        <name>Ca(2+)</name>
        <dbReference type="ChEBI" id="CHEBI:29108"/>
        <label>1</label>
    </ligand>
</feature>
<feature type="binding site" evidence="2">
    <location>
        <position position="376"/>
    </location>
    <ligand>
        <name>Ca(2+)</name>
        <dbReference type="ChEBI" id="CHEBI:29108"/>
        <label>1</label>
    </ligand>
</feature>
<feature type="binding site" evidence="2">
    <location>
        <position position="380"/>
    </location>
    <ligand>
        <name>Ca(2+)</name>
        <dbReference type="ChEBI" id="CHEBI:29108"/>
        <label>1</label>
    </ligand>
</feature>
<feature type="binding site" evidence="2">
    <location>
        <position position="434"/>
    </location>
    <ligand>
        <name>Ca(2+)</name>
        <dbReference type="ChEBI" id="CHEBI:29108"/>
        <label>2</label>
    </ligand>
</feature>
<feature type="binding site" evidence="2">
    <location>
        <position position="436"/>
    </location>
    <ligand>
        <name>Ca(2+)</name>
        <dbReference type="ChEBI" id="CHEBI:29108"/>
        <label>2</label>
    </ligand>
</feature>
<feature type="binding site" evidence="2">
    <location>
        <position position="438"/>
    </location>
    <ligand>
        <name>Ca(2+)</name>
        <dbReference type="ChEBI" id="CHEBI:29108"/>
        <label>2</label>
    </ligand>
</feature>
<feature type="binding site" evidence="2">
    <location>
        <position position="442"/>
    </location>
    <ligand>
        <name>Ca(2+)</name>
        <dbReference type="ChEBI" id="CHEBI:29108"/>
        <label>2</label>
    </ligand>
</feature>
<feature type="binding site" evidence="2">
    <location>
        <position position="492"/>
    </location>
    <ligand>
        <name>Ca(2+)</name>
        <dbReference type="ChEBI" id="CHEBI:29108"/>
        <label>3</label>
    </ligand>
</feature>
<feature type="binding site" evidence="2">
    <location>
        <position position="494"/>
    </location>
    <ligand>
        <name>Ca(2+)</name>
        <dbReference type="ChEBI" id="CHEBI:29108"/>
        <label>3</label>
    </ligand>
</feature>
<feature type="binding site" evidence="2">
    <location>
        <position position="496"/>
    </location>
    <ligand>
        <name>Ca(2+)</name>
        <dbReference type="ChEBI" id="CHEBI:29108"/>
        <label>3</label>
    </ligand>
</feature>
<feature type="binding site" evidence="2">
    <location>
        <position position="498"/>
    </location>
    <ligand>
        <name>Ca(2+)</name>
        <dbReference type="ChEBI" id="CHEBI:29108"/>
        <label>3</label>
    </ligand>
</feature>
<feature type="binding site" evidence="2">
    <location>
        <position position="500"/>
    </location>
    <ligand>
        <name>Ca(2+)</name>
        <dbReference type="ChEBI" id="CHEBI:29108"/>
        <label>3</label>
    </ligand>
</feature>
<feature type="glycosylation site" description="N-linked (GlcNAc...) asparagine" evidence="3">
    <location>
        <position position="86"/>
    </location>
</feature>
<feature type="glycosylation site" description="N-linked (GlcNAc...) asparagine" evidence="3">
    <location>
        <position position="784"/>
    </location>
</feature>
<feature type="glycosylation site" description="N-linked (GlcNAc...) asparagine" evidence="3">
    <location>
        <position position="988"/>
    </location>
</feature>
<feature type="glycosylation site" description="N-linked (GlcNAc...) asparagine" evidence="7">
    <location>
        <position position="1023"/>
    </location>
</feature>
<feature type="glycosylation site" description="N-linked (GlcNAc...) asparagine" evidence="3">
    <location>
        <position position="1043"/>
    </location>
</feature>
<feature type="disulfide bond" evidence="1">
    <location>
        <begin position="94"/>
        <end position="103"/>
    </location>
</feature>
<feature type="disulfide bond" evidence="1">
    <location>
        <begin position="140"/>
        <end position="163"/>
    </location>
</feature>
<feature type="disulfide bond" evidence="1">
    <location>
        <begin position="184"/>
        <end position="197"/>
    </location>
</feature>
<feature type="disulfide bond" evidence="1">
    <location>
        <begin position="539"/>
        <end position="546"/>
    </location>
</feature>
<feature type="disulfide bond" evidence="1">
    <location>
        <begin position="552"/>
        <end position="615"/>
    </location>
</feature>
<feature type="disulfide bond" evidence="1">
    <location>
        <begin position="681"/>
        <end position="687"/>
    </location>
</feature>
<feature type="disulfide bond" evidence="1">
    <location>
        <begin position="781"/>
        <end position="792"/>
    </location>
</feature>
<feature type="disulfide bond" description="Interchain (between heavy and light chains)" evidence="1">
    <location>
        <begin position="939"/>
        <end position="993"/>
    </location>
</feature>
<feature type="disulfide bond" evidence="1">
    <location>
        <begin position="999"/>
        <end position="1004"/>
    </location>
</feature>
<feature type="splice variant" id="VSP_002731" description="In isoform Alpha-7X2A and isoform Alpha-7X2B." evidence="10">
    <location>
        <begin position="224"/>
        <end position="267"/>
    </location>
</feature>
<feature type="splice variant" id="VSP_002732" description="In isoform Alpha-7X1A and isoform Alpha-7X1B." evidence="11">
    <location>
        <begin position="268"/>
        <end position="307"/>
    </location>
</feature>
<feature type="splice variant" id="VSP_002733" description="In isoform Alpha-7X1A, isoform Alpha-7X2A and isoform Alpha-7X1X2A." evidence="11">
    <original>LGFFKRAKHPEATVPQYHAVKIPREDRQQFKEEKTGTIQRSNWGNSQWEGSDAHPILAADWHPELGPDGHPVPATA</original>
    <variation>CGFFRRNSPSSSFPTNYHRAHLAVQPSAMEAGGPGTVGWDSSSGRSTPRPPCPSTTQ</variation>
    <location>
        <begin position="1104"/>
        <end position="1179"/>
    </location>
</feature>
<feature type="sequence conflict" description="In Ref. 2; CAA73023/CAA73024." evidence="11" ref="2">
    <original>A</original>
    <variation>P</variation>
    <location>
        <position position="133"/>
    </location>
</feature>
<feature type="sequence conflict" description="In Ref. 1; AAA16599." evidence="11" ref="1">
    <original>T</original>
    <variation>Q</variation>
    <location>
        <position position="347"/>
    </location>
</feature>
<feature type="sequence conflict" description="In Ref. 2; CAA73023/CAA73024." evidence="11" ref="2">
    <original>T</original>
    <variation>S</variation>
    <location>
        <position position="347"/>
    </location>
</feature>
<feature type="sequence conflict" description="In Ref. 1; AAA16600." evidence="11" ref="1">
    <original>G</original>
    <variation>R</variation>
    <location>
        <position position="647"/>
    </location>
</feature>
<feature type="sequence conflict" description="In Ref. 2; CAA73023/CAA73024." evidence="11" ref="2">
    <original>EL</original>
    <variation>DV</variation>
    <location>
        <begin position="879"/>
        <end position="880"/>
    </location>
</feature>
<feature type="sequence conflict" description="In Ref. 2; CAA73023/CAA73024." evidence="11" ref="2">
    <original>R</original>
    <variation>S</variation>
    <location>
        <position position="882"/>
    </location>
</feature>
<feature type="sequence conflict" description="In Ref. 2; CAA73023/CAA73024." evidence="11" ref="2">
    <original>N</original>
    <variation>F</variation>
    <location>
        <position position="904"/>
    </location>
</feature>
<feature type="sequence conflict" description="In Ref. 2; CAA73023/CAA73024." evidence="11" ref="2">
    <original>M</original>
    <variation>V</variation>
    <location>
        <position position="989"/>
    </location>
</feature>
<feature type="sequence conflict" description="In Ref. 2; CAA73023/CAA73024." evidence="11" ref="2">
    <original>PR</original>
    <variation>AQG</variation>
    <location>
        <begin position="994"/>
        <end position="995"/>
    </location>
</feature>
<feature type="sequence conflict" description="In Ref. 1; AAA16598." evidence="11" ref="1">
    <original>MAVK</original>
    <variation>LLIN</variation>
    <location>
        <begin position="1031"/>
        <end position="1034"/>
    </location>
</feature>
<feature type="sequence conflict" description="In Ref. 2; CAA73023/CAA73024." evidence="11" ref="2">
    <original>G</original>
    <variation>A</variation>
    <location>
        <position position="1086"/>
    </location>
</feature>
<feature type="sequence conflict" description="In Ref. 5; L16544." evidence="11" ref="5">
    <original>G</original>
    <variation>A</variation>
    <location sequence="Q61738-2">
        <position position="1046"/>
    </location>
</feature>
<feature type="sequence conflict" description="In Ref. 1; AAA16598." evidence="11" ref="1">
    <original>TQ</original>
    <variation>T</variation>
    <location sequence="Q61738-2">
        <begin position="1119"/>
        <end position="1120"/>
    </location>
</feature>
<feature type="sequence conflict" description="In Ref. 5; L16544." evidence="11" ref="5">
    <original>G</original>
    <variation>A</variation>
    <location sequence="Q61738-4">
        <position position="1042"/>
    </location>
</feature>
<feature type="sequence conflict" description="In Ref. 1; AAA16598." evidence="11" ref="1">
    <original>TQ</original>
    <variation>T</variation>
    <location sequence="Q61738-4">
        <begin position="1115"/>
        <end position="1116"/>
    </location>
</feature>
<feature type="sequence conflict" description="In Ref. 5; L16544." evidence="11" ref="5">
    <original>G</original>
    <variation>A</variation>
    <location sequence="Q61738-6">
        <position position="1086"/>
    </location>
</feature>
<feature type="sequence conflict" description="In Ref. 1; AAA16598." evidence="11" ref="1">
    <original>TQ</original>
    <variation>T</variation>
    <location sequence="Q61738-6">
        <begin position="1159"/>
        <end position="1160"/>
    </location>
</feature>
<protein>
    <recommendedName>
        <fullName>Integrin alpha-7</fullName>
    </recommendedName>
    <component>
        <recommendedName>
            <fullName>Integrin alpha-7 heavy chain</fullName>
        </recommendedName>
    </component>
    <component>
        <recommendedName>
            <fullName>Integrin alpha-7 light chain</fullName>
        </recommendedName>
    </component>
</protein>
<gene>
    <name type="primary">Itga7</name>
</gene>
<accession>Q61738</accession>
<accession>O88731</accession>
<accession>O88732</accession>
<accession>P70350</accession>
<accession>Q61737</accession>
<accession>Q61741</accession>